<organism>
    <name type="scientific">Leptothrix cholodnii (strain ATCC 51168 / LMG 8142 / SP-6)</name>
    <name type="common">Leptothrix discophora (strain SP-6)</name>
    <dbReference type="NCBI Taxonomy" id="395495"/>
    <lineage>
        <taxon>Bacteria</taxon>
        <taxon>Pseudomonadati</taxon>
        <taxon>Pseudomonadota</taxon>
        <taxon>Betaproteobacteria</taxon>
        <taxon>Burkholderiales</taxon>
        <taxon>Sphaerotilaceae</taxon>
        <taxon>Leptothrix</taxon>
    </lineage>
</organism>
<keyword id="KW-0963">Cytoplasm</keyword>
<keyword id="KW-0489">Methyltransferase</keyword>
<keyword id="KW-1185">Reference proteome</keyword>
<keyword id="KW-0694">RNA-binding</keyword>
<keyword id="KW-0698">rRNA processing</keyword>
<keyword id="KW-0949">S-adenosyl-L-methionine</keyword>
<keyword id="KW-0808">Transferase</keyword>
<proteinExistence type="inferred from homology"/>
<dbReference type="EC" id="2.1.1.182" evidence="1"/>
<dbReference type="EMBL" id="CP001013">
    <property type="protein sequence ID" value="ACB36167.1"/>
    <property type="molecule type" value="Genomic_DNA"/>
</dbReference>
<dbReference type="RefSeq" id="WP_012348913.1">
    <property type="nucleotide sequence ID" value="NC_010524.1"/>
</dbReference>
<dbReference type="SMR" id="B1Y7L9"/>
<dbReference type="STRING" id="395495.Lcho_3913"/>
<dbReference type="KEGG" id="lch:Lcho_3913"/>
<dbReference type="eggNOG" id="COG0030">
    <property type="taxonomic scope" value="Bacteria"/>
</dbReference>
<dbReference type="HOGENOM" id="CLU_041220_0_1_4"/>
<dbReference type="OrthoDB" id="9814755at2"/>
<dbReference type="Proteomes" id="UP000001693">
    <property type="component" value="Chromosome"/>
</dbReference>
<dbReference type="GO" id="GO:0005829">
    <property type="term" value="C:cytosol"/>
    <property type="evidence" value="ECO:0007669"/>
    <property type="project" value="TreeGrafter"/>
</dbReference>
<dbReference type="GO" id="GO:0052908">
    <property type="term" value="F:16S rRNA (adenine(1518)-N(6)/adenine(1519)-N(6))-dimethyltransferase activity"/>
    <property type="evidence" value="ECO:0007669"/>
    <property type="project" value="UniProtKB-EC"/>
</dbReference>
<dbReference type="GO" id="GO:0003723">
    <property type="term" value="F:RNA binding"/>
    <property type="evidence" value="ECO:0007669"/>
    <property type="project" value="UniProtKB-KW"/>
</dbReference>
<dbReference type="Gene3D" id="1.10.8.100">
    <property type="entry name" value="Ribosomal RNA adenine dimethylase-like, domain 2"/>
    <property type="match status" value="1"/>
</dbReference>
<dbReference type="Gene3D" id="3.40.50.150">
    <property type="entry name" value="Vaccinia Virus protein VP39"/>
    <property type="match status" value="1"/>
</dbReference>
<dbReference type="HAMAP" id="MF_00607">
    <property type="entry name" value="16SrRNA_methyltr_A"/>
    <property type="match status" value="1"/>
</dbReference>
<dbReference type="InterPro" id="IPR001737">
    <property type="entry name" value="KsgA/Erm"/>
</dbReference>
<dbReference type="InterPro" id="IPR023165">
    <property type="entry name" value="rRNA_Ade_diMease-like_C"/>
</dbReference>
<dbReference type="InterPro" id="IPR020596">
    <property type="entry name" value="rRNA_Ade_Mease_Trfase_CS"/>
</dbReference>
<dbReference type="InterPro" id="IPR020598">
    <property type="entry name" value="rRNA_Ade_methylase_Trfase_N"/>
</dbReference>
<dbReference type="InterPro" id="IPR011530">
    <property type="entry name" value="rRNA_adenine_dimethylase"/>
</dbReference>
<dbReference type="InterPro" id="IPR029063">
    <property type="entry name" value="SAM-dependent_MTases_sf"/>
</dbReference>
<dbReference type="NCBIfam" id="TIGR00755">
    <property type="entry name" value="ksgA"/>
    <property type="match status" value="1"/>
</dbReference>
<dbReference type="PANTHER" id="PTHR11727">
    <property type="entry name" value="DIMETHYLADENOSINE TRANSFERASE"/>
    <property type="match status" value="1"/>
</dbReference>
<dbReference type="PANTHER" id="PTHR11727:SF7">
    <property type="entry name" value="DIMETHYLADENOSINE TRANSFERASE-RELATED"/>
    <property type="match status" value="1"/>
</dbReference>
<dbReference type="Pfam" id="PF00398">
    <property type="entry name" value="RrnaAD"/>
    <property type="match status" value="1"/>
</dbReference>
<dbReference type="SMART" id="SM00650">
    <property type="entry name" value="rADc"/>
    <property type="match status" value="1"/>
</dbReference>
<dbReference type="SUPFAM" id="SSF53335">
    <property type="entry name" value="S-adenosyl-L-methionine-dependent methyltransferases"/>
    <property type="match status" value="1"/>
</dbReference>
<dbReference type="PROSITE" id="PS01131">
    <property type="entry name" value="RRNA_A_DIMETH"/>
    <property type="match status" value="1"/>
</dbReference>
<dbReference type="PROSITE" id="PS51689">
    <property type="entry name" value="SAM_RNA_A_N6_MT"/>
    <property type="match status" value="1"/>
</dbReference>
<comment type="function">
    <text evidence="1">Specifically dimethylates two adjacent adenosines (A1518 and A1519) in the loop of a conserved hairpin near the 3'-end of 16S rRNA in the 30S particle. May play a critical role in biogenesis of 30S subunits.</text>
</comment>
<comment type="catalytic activity">
    <reaction evidence="1">
        <text>adenosine(1518)/adenosine(1519) in 16S rRNA + 4 S-adenosyl-L-methionine = N(6)-dimethyladenosine(1518)/N(6)-dimethyladenosine(1519) in 16S rRNA + 4 S-adenosyl-L-homocysteine + 4 H(+)</text>
        <dbReference type="Rhea" id="RHEA:19609"/>
        <dbReference type="Rhea" id="RHEA-COMP:10232"/>
        <dbReference type="Rhea" id="RHEA-COMP:10233"/>
        <dbReference type="ChEBI" id="CHEBI:15378"/>
        <dbReference type="ChEBI" id="CHEBI:57856"/>
        <dbReference type="ChEBI" id="CHEBI:59789"/>
        <dbReference type="ChEBI" id="CHEBI:74411"/>
        <dbReference type="ChEBI" id="CHEBI:74493"/>
        <dbReference type="EC" id="2.1.1.182"/>
    </reaction>
</comment>
<comment type="subcellular location">
    <subcellularLocation>
        <location evidence="1">Cytoplasm</location>
    </subcellularLocation>
</comment>
<comment type="similarity">
    <text evidence="1">Belongs to the class I-like SAM-binding methyltransferase superfamily. rRNA adenine N(6)-methyltransferase family. RsmA subfamily.</text>
</comment>
<gene>
    <name evidence="1" type="primary">rsmA</name>
    <name evidence="1" type="synonym">ksgA</name>
    <name type="ordered locus">Lcho_3913</name>
</gene>
<accession>B1Y7L9</accession>
<reference key="1">
    <citation type="submission" date="2008-03" db="EMBL/GenBank/DDBJ databases">
        <title>Complete sequence of Leptothrix cholodnii SP-6.</title>
        <authorList>
            <consortium name="US DOE Joint Genome Institute"/>
            <person name="Copeland A."/>
            <person name="Lucas S."/>
            <person name="Lapidus A."/>
            <person name="Glavina del Rio T."/>
            <person name="Dalin E."/>
            <person name="Tice H."/>
            <person name="Bruce D."/>
            <person name="Goodwin L."/>
            <person name="Pitluck S."/>
            <person name="Chertkov O."/>
            <person name="Brettin T."/>
            <person name="Detter J.C."/>
            <person name="Han C."/>
            <person name="Kuske C.R."/>
            <person name="Schmutz J."/>
            <person name="Larimer F."/>
            <person name="Land M."/>
            <person name="Hauser L."/>
            <person name="Kyrpides N."/>
            <person name="Lykidis A."/>
            <person name="Emerson D."/>
            <person name="Richardson P."/>
        </authorList>
    </citation>
    <scope>NUCLEOTIDE SEQUENCE [LARGE SCALE GENOMIC DNA]</scope>
    <source>
        <strain>ATCC 51168 / LMG 8142 / SP-6</strain>
    </source>
</reference>
<feature type="chain" id="PRO_1000130288" description="Ribosomal RNA small subunit methyltransferase A">
    <location>
        <begin position="1"/>
        <end position="269"/>
    </location>
</feature>
<feature type="binding site" evidence="1">
    <location>
        <position position="12"/>
    </location>
    <ligand>
        <name>S-adenosyl-L-methionine</name>
        <dbReference type="ChEBI" id="CHEBI:59789"/>
    </ligand>
</feature>
<feature type="binding site" evidence="1">
    <location>
        <position position="14"/>
    </location>
    <ligand>
        <name>S-adenosyl-L-methionine</name>
        <dbReference type="ChEBI" id="CHEBI:59789"/>
    </ligand>
</feature>
<feature type="binding site" evidence="1">
    <location>
        <position position="39"/>
    </location>
    <ligand>
        <name>S-adenosyl-L-methionine</name>
        <dbReference type="ChEBI" id="CHEBI:59789"/>
    </ligand>
</feature>
<feature type="binding site" evidence="1">
    <location>
        <position position="60"/>
    </location>
    <ligand>
        <name>S-adenosyl-L-methionine</name>
        <dbReference type="ChEBI" id="CHEBI:59789"/>
    </ligand>
</feature>
<feature type="binding site" evidence="1">
    <location>
        <position position="81"/>
    </location>
    <ligand>
        <name>S-adenosyl-L-methionine</name>
        <dbReference type="ChEBI" id="CHEBI:59789"/>
    </ligand>
</feature>
<feature type="binding site" evidence="1">
    <location>
        <position position="103"/>
    </location>
    <ligand>
        <name>S-adenosyl-L-methionine</name>
        <dbReference type="ChEBI" id="CHEBI:59789"/>
    </ligand>
</feature>
<name>RSMA_LEPCP</name>
<evidence type="ECO:0000255" key="1">
    <source>
        <dbReference type="HAMAP-Rule" id="MF_00607"/>
    </source>
</evidence>
<protein>
    <recommendedName>
        <fullName evidence="1">Ribosomal RNA small subunit methyltransferase A</fullName>
        <ecNumber evidence="1">2.1.1.182</ecNumber>
    </recommendedName>
    <alternativeName>
        <fullName evidence="1">16S rRNA (adenine(1518)-N(6)/adenine(1519)-N(6))-dimethyltransferase</fullName>
    </alternativeName>
    <alternativeName>
        <fullName evidence="1">16S rRNA dimethyladenosine transferase</fullName>
    </alternativeName>
    <alternativeName>
        <fullName evidence="1">16S rRNA dimethylase</fullName>
    </alternativeName>
    <alternativeName>
        <fullName evidence="1">S-adenosylmethionine-6-N', N'-adenosyl(rRNA) dimethyltransferase</fullName>
    </alternativeName>
</protein>
<sequence>MKHIPRKRFGQHFLADQSVLDRIVQLIDPQPGEALVEIGPGLGAMTDPVVERCKRLTVVELDRDLAARLRKRPELTVIESDVLKVDFTALAQAAGRPVRVIGNLPYNISSPILFHLLEQVASVQDQHFMLQKEVVDRMASAPGSKDYGRLSVMLQWRYQIESLLDVPPESFDPPPRVDSAIVRMLPLAQPPAVDPKLLGELVTVAFSQRRKMLRNTLGRWLEAREHGGAFDLTRRAEEVPVAEFVALTMAIQQTPSNSPLTAGATPDAA</sequence>